<evidence type="ECO:0000255" key="1"/>
<evidence type="ECO:0000305" key="2"/>
<organism>
    <name type="scientific">Rhizobium meliloti (strain 1021)</name>
    <name type="common">Ensifer meliloti</name>
    <name type="synonym">Sinorhizobium meliloti</name>
    <dbReference type="NCBI Taxonomy" id="266834"/>
    <lineage>
        <taxon>Bacteria</taxon>
        <taxon>Pseudomonadati</taxon>
        <taxon>Pseudomonadota</taxon>
        <taxon>Alphaproteobacteria</taxon>
        <taxon>Hyphomicrobiales</taxon>
        <taxon>Rhizobiaceae</taxon>
        <taxon>Sinorhizobium/Ensifer group</taxon>
        <taxon>Sinorhizobium</taxon>
    </lineage>
</organism>
<protein>
    <recommendedName>
        <fullName>Nitrogenase iron-molybdenum cofactor biosynthesis protein NifN</fullName>
    </recommendedName>
</protein>
<geneLocation type="plasmid">
    <name>pSymA</name>
    <name>megaplasmid 1</name>
</geneLocation>
<reference key="1">
    <citation type="journal article" date="1987" name="J. Bacteriol.">
        <title>Rhizobium meliloti nifN (fixF) gene is part of an operon regulated by a nifA-dependent promoter and codes for a polypeptide homologous to the nifK gene product.</title>
        <authorList>
            <person name="Aguilar O.M."/>
            <person name="Reilaender H."/>
            <person name="Arnold W."/>
            <person name="Puehler A."/>
        </authorList>
    </citation>
    <scope>NUCLEOTIDE SEQUENCE [GENOMIC DNA]</scope>
    <source>
        <strain>RCR2011 / SU47</strain>
    </source>
</reference>
<reference key="2">
    <citation type="journal article" date="2001" name="Proc. Natl. Acad. Sci. U.S.A.">
        <title>Nucleotide sequence and predicted functions of the entire Sinorhizobium meliloti pSymA megaplasmid.</title>
        <authorList>
            <person name="Barnett M.J."/>
            <person name="Fisher R.F."/>
            <person name="Jones T."/>
            <person name="Komp C."/>
            <person name="Abola A.P."/>
            <person name="Barloy-Hubler F."/>
            <person name="Bowser L."/>
            <person name="Capela D."/>
            <person name="Galibert F."/>
            <person name="Gouzy J."/>
            <person name="Gurjal M."/>
            <person name="Hong A."/>
            <person name="Huizar L."/>
            <person name="Hyman R.W."/>
            <person name="Kahn D."/>
            <person name="Kahn M.L."/>
            <person name="Kalman S."/>
            <person name="Keating D.H."/>
            <person name="Palm C."/>
            <person name="Peck M.C."/>
            <person name="Surzycki R."/>
            <person name="Wells D.H."/>
            <person name="Yeh K.-C."/>
            <person name="Davis R.W."/>
            <person name="Federspiel N.A."/>
            <person name="Long S.R."/>
        </authorList>
    </citation>
    <scope>NUCLEOTIDE SEQUENCE [LARGE SCALE GENOMIC DNA]</scope>
    <source>
        <strain>1021</strain>
    </source>
</reference>
<reference key="3">
    <citation type="journal article" date="2001" name="Science">
        <title>The composite genome of the legume symbiont Sinorhizobium meliloti.</title>
        <authorList>
            <person name="Galibert F."/>
            <person name="Finan T.M."/>
            <person name="Long S.R."/>
            <person name="Puehler A."/>
            <person name="Abola P."/>
            <person name="Ampe F."/>
            <person name="Barloy-Hubler F."/>
            <person name="Barnett M.J."/>
            <person name="Becker A."/>
            <person name="Boistard P."/>
            <person name="Bothe G."/>
            <person name="Boutry M."/>
            <person name="Bowser L."/>
            <person name="Buhrmester J."/>
            <person name="Cadieu E."/>
            <person name="Capela D."/>
            <person name="Chain P."/>
            <person name="Cowie A."/>
            <person name="Davis R.W."/>
            <person name="Dreano S."/>
            <person name="Federspiel N.A."/>
            <person name="Fisher R.F."/>
            <person name="Gloux S."/>
            <person name="Godrie T."/>
            <person name="Goffeau A."/>
            <person name="Golding B."/>
            <person name="Gouzy J."/>
            <person name="Gurjal M."/>
            <person name="Hernandez-Lucas I."/>
            <person name="Hong A."/>
            <person name="Huizar L."/>
            <person name="Hyman R.W."/>
            <person name="Jones T."/>
            <person name="Kahn D."/>
            <person name="Kahn M.L."/>
            <person name="Kalman S."/>
            <person name="Keating D.H."/>
            <person name="Kiss E."/>
            <person name="Komp C."/>
            <person name="Lelaure V."/>
            <person name="Masuy D."/>
            <person name="Palm C."/>
            <person name="Peck M.C."/>
            <person name="Pohl T.M."/>
            <person name="Portetelle D."/>
            <person name="Purnelle B."/>
            <person name="Ramsperger U."/>
            <person name="Surzycki R."/>
            <person name="Thebault P."/>
            <person name="Vandenbol M."/>
            <person name="Vorhoelter F.J."/>
            <person name="Weidner S."/>
            <person name="Wells D.H."/>
            <person name="Wong K."/>
            <person name="Yeh K.-C."/>
            <person name="Batut J."/>
        </authorList>
    </citation>
    <scope>NUCLEOTIDE SEQUENCE [LARGE SCALE GENOMIC DNA]</scope>
    <source>
        <strain>1021</strain>
    </source>
</reference>
<dbReference type="EMBL" id="M18272">
    <property type="protein sequence ID" value="AAA88520.1"/>
    <property type="molecule type" value="Genomic_DNA"/>
</dbReference>
<dbReference type="EMBL" id="AE006469">
    <property type="protein sequence ID" value="AAK65136.1"/>
    <property type="molecule type" value="Genomic_DNA"/>
</dbReference>
<dbReference type="PIR" id="C28379">
    <property type="entry name" value="C28379"/>
</dbReference>
<dbReference type="PIR" id="F95321">
    <property type="entry name" value="F95321"/>
</dbReference>
<dbReference type="RefSeq" id="NP_435724.1">
    <property type="nucleotide sequence ID" value="NC_003037.1"/>
</dbReference>
<dbReference type="RefSeq" id="WP_010967458.1">
    <property type="nucleotide sequence ID" value="NC_003037.1"/>
</dbReference>
<dbReference type="SMR" id="P12781"/>
<dbReference type="EnsemblBacteria" id="AAK65136">
    <property type="protein sequence ID" value="AAK65136"/>
    <property type="gene ID" value="SMa0873"/>
</dbReference>
<dbReference type="GeneID" id="89573899"/>
<dbReference type="KEGG" id="sme:SMa0873"/>
<dbReference type="PATRIC" id="fig|266834.11.peg.488"/>
<dbReference type="HOGENOM" id="CLU_025876_2_0_5"/>
<dbReference type="OrthoDB" id="9800746at2"/>
<dbReference type="UniPathway" id="UPA00782"/>
<dbReference type="Proteomes" id="UP000001976">
    <property type="component" value="Plasmid pSymA"/>
</dbReference>
<dbReference type="GO" id="GO:0046872">
    <property type="term" value="F:metal ion binding"/>
    <property type="evidence" value="ECO:0007669"/>
    <property type="project" value="UniProtKB-KW"/>
</dbReference>
<dbReference type="GO" id="GO:0016163">
    <property type="term" value="F:nitrogenase activity"/>
    <property type="evidence" value="ECO:0007669"/>
    <property type="project" value="InterPro"/>
</dbReference>
<dbReference type="GO" id="GO:0009399">
    <property type="term" value="P:nitrogen fixation"/>
    <property type="evidence" value="ECO:0007669"/>
    <property type="project" value="UniProtKB-KW"/>
</dbReference>
<dbReference type="GO" id="GO:0065003">
    <property type="term" value="P:protein-containing complex assembly"/>
    <property type="evidence" value="ECO:0007669"/>
    <property type="project" value="InterPro"/>
</dbReference>
<dbReference type="CDD" id="cd01966">
    <property type="entry name" value="Nitrogenase_NifN_1"/>
    <property type="match status" value="1"/>
</dbReference>
<dbReference type="Gene3D" id="6.10.250.1090">
    <property type="match status" value="1"/>
</dbReference>
<dbReference type="Gene3D" id="3.40.50.1980">
    <property type="entry name" value="Nitrogenase molybdenum iron protein domain"/>
    <property type="match status" value="3"/>
</dbReference>
<dbReference type="InterPro" id="IPR050152">
    <property type="entry name" value="ChlB/BchB/BchZ"/>
</dbReference>
<dbReference type="InterPro" id="IPR000510">
    <property type="entry name" value="Nase/OxRdtase_comp1"/>
</dbReference>
<dbReference type="InterPro" id="IPR000318">
    <property type="entry name" value="Nase_comp1_CS"/>
</dbReference>
<dbReference type="InterPro" id="IPR005975">
    <property type="entry name" value="Nase_Mo-Fe_CF"/>
</dbReference>
<dbReference type="NCBIfam" id="TIGR01285">
    <property type="entry name" value="nifN"/>
    <property type="match status" value="1"/>
</dbReference>
<dbReference type="PANTHER" id="PTHR33712">
    <property type="entry name" value="LIGHT-INDEPENDENT PROTOCHLOROPHYLLIDE REDUCTASE SUBUNIT B"/>
    <property type="match status" value="1"/>
</dbReference>
<dbReference type="PANTHER" id="PTHR33712:SF7">
    <property type="entry name" value="LIGHT-INDEPENDENT PROTOCHLOROPHYLLIDE REDUCTASE SUBUNIT B"/>
    <property type="match status" value="1"/>
</dbReference>
<dbReference type="Pfam" id="PF00148">
    <property type="entry name" value="Oxidored_nitro"/>
    <property type="match status" value="1"/>
</dbReference>
<dbReference type="SUPFAM" id="SSF53807">
    <property type="entry name" value="Helical backbone' metal receptor"/>
    <property type="match status" value="1"/>
</dbReference>
<dbReference type="PROSITE" id="PS00699">
    <property type="entry name" value="NITROGENASE_1_1"/>
    <property type="match status" value="1"/>
</dbReference>
<gene>
    <name type="primary">nifN</name>
    <name type="synonym">fixF</name>
    <name type="ordered locus">RA0478</name>
    <name type="ORF">SMa0873</name>
</gene>
<proteinExistence type="inferred from homology"/>
<keyword id="KW-0479">Metal-binding</keyword>
<keyword id="KW-0535">Nitrogen fixation</keyword>
<keyword id="KW-0614">Plasmid</keyword>
<keyword id="KW-1185">Reference proteome</keyword>
<feature type="chain" id="PRO_0000153131" description="Nitrogenase iron-molybdenum cofactor biosynthesis protein NifN">
    <location>
        <begin position="1"/>
        <end position="441"/>
    </location>
</feature>
<feature type="binding site" evidence="1">
    <location>
        <position position="44"/>
    </location>
    <ligand>
        <name>[7Fe-Mo-9S-C-homocitryl] cluster</name>
        <dbReference type="ChEBI" id="CHEBI:30409"/>
        <note>cofactor</note>
    </ligand>
</feature>
<name>NIFN_RHIME</name>
<accession>P12781</accession>
<sequence>MVRILSQTKWATINPLKSSQPLGGALAFLGVGGAIPLFHGSQGCTSFALVLLVRHFKEAIPLQTTAMDDVAIVLGGAGHLEQAILNLKIRAKPKLIGICTTALVETRGEDLAGDLASIKLERAEELTGTDVVLANTPDFDGAMEEGWAKAVTAMIKAITRIGEQERQSRTIAILPGWNLTIADIEQLRDIVESFGLKPIILPDLSGSLDGIVPDDRWVPTTYGGISVEEIRELGTAAQCIAIGEHMRGPAEEMKTLTGVPYVLFQSLTGLNAVDRFVSLLSSISGRPAPAKVRRRRAQLQDALLDGHFHSAGKKIAIAAEPDQLYQLATFFICLGAEIVAAVTTKGASKILHKVPVEIIQVGDLGDLESLATHADLLVTHSHGQHASARLGTPLMRVGFPVFDQLGSQHKLTILYHGTRDLIFEVSNIFQSHSLAPTHRGT</sequence>
<comment type="function">
    <text>This protein may play a role in the biosynthesis of the prosthetic group of nitrogenase (FeMo cofactor).</text>
</comment>
<comment type="pathway">
    <text>Cofactor biosynthesis; Fe-Mo cofactor biosynthesis.</text>
</comment>
<comment type="similarity">
    <text evidence="2">Belongs to the NifD/NifK/NifE/NifN family.</text>
</comment>